<sequence>MIQQETLLQVADNSGIKKVMCIKVLGGSKKRYASVGDEIIVAVKDAQPAFGLKDSTGKKVHNKAVQRAVVVRTTKEIRRPDGSYIRFDDNACAIIDDKGNPKGTRIFGPVARELRDKKYAKIISLAPEVL</sequence>
<organism>
    <name type="scientific">Leptospira interrogans serogroup Icterohaemorrhagiae serovar Lai (strain 56601)</name>
    <dbReference type="NCBI Taxonomy" id="189518"/>
    <lineage>
        <taxon>Bacteria</taxon>
        <taxon>Pseudomonadati</taxon>
        <taxon>Spirochaetota</taxon>
        <taxon>Spirochaetia</taxon>
        <taxon>Leptospirales</taxon>
        <taxon>Leptospiraceae</taxon>
        <taxon>Leptospira</taxon>
    </lineage>
</organism>
<proteinExistence type="inferred from homology"/>
<comment type="function">
    <text evidence="1">Binds to 23S rRNA. Forms part of two intersubunit bridges in the 70S ribosome.</text>
</comment>
<comment type="subunit">
    <text evidence="1">Part of the 50S ribosomal subunit. Forms a cluster with proteins L3 and L19. In the 70S ribosome, L14 and L19 interact and together make contacts with the 16S rRNA in bridges B5 and B8.</text>
</comment>
<comment type="similarity">
    <text evidence="1">Belongs to the universal ribosomal protein uL14 family.</text>
</comment>
<evidence type="ECO:0000255" key="1">
    <source>
        <dbReference type="HAMAP-Rule" id="MF_01367"/>
    </source>
</evidence>
<evidence type="ECO:0000305" key="2"/>
<feature type="chain" id="PRO_0000128547" description="Large ribosomal subunit protein uL14">
    <location>
        <begin position="1"/>
        <end position="130"/>
    </location>
</feature>
<feature type="sequence conflict" description="In Ref. 1; AAD40593." evidence="2" ref="1">
    <original>L</original>
    <variation>Q</variation>
    <location>
        <position position="130"/>
    </location>
</feature>
<name>RL14_LEPIN</name>
<protein>
    <recommendedName>
        <fullName evidence="1">Large ribosomal subunit protein uL14</fullName>
    </recommendedName>
    <alternativeName>
        <fullName evidence="2">50S ribosomal protein L14</fullName>
    </alternativeName>
</protein>
<accession>Q9XD26</accession>
<reference key="1">
    <citation type="journal article" date="2000" name="FEMS Microbiol. Lett.">
        <title>Characterization of the Leptospira interrogans S10-spc-alpha operon.</title>
        <authorList>
            <person name="Zuerner R.L."/>
            <person name="Hartskeerl R.A."/>
            <person name="van de Kemp H."/>
            <person name="Bal A.E."/>
        </authorList>
    </citation>
    <scope>NUCLEOTIDE SEQUENCE [GENOMIC DNA]</scope>
    <source>
        <strain>Lai / Serogroup Icterohaemorrhagiae / Serovar lai</strain>
    </source>
</reference>
<reference key="2">
    <citation type="journal article" date="2003" name="Nature">
        <title>Unique physiological and pathogenic features of Leptospira interrogans revealed by whole-genome sequencing.</title>
        <authorList>
            <person name="Ren S.-X."/>
            <person name="Fu G."/>
            <person name="Jiang X.-G."/>
            <person name="Zeng R."/>
            <person name="Miao Y.-G."/>
            <person name="Xu H."/>
            <person name="Zhang Y.-X."/>
            <person name="Xiong H."/>
            <person name="Lu G."/>
            <person name="Lu L.-F."/>
            <person name="Jiang H.-Q."/>
            <person name="Jia J."/>
            <person name="Tu Y.-F."/>
            <person name="Jiang J.-X."/>
            <person name="Gu W.-Y."/>
            <person name="Zhang Y.-Q."/>
            <person name="Cai Z."/>
            <person name="Sheng H.-H."/>
            <person name="Yin H.-F."/>
            <person name="Zhang Y."/>
            <person name="Zhu G.-F."/>
            <person name="Wan M."/>
            <person name="Huang H.-L."/>
            <person name="Qian Z."/>
            <person name="Wang S.-Y."/>
            <person name="Ma W."/>
            <person name="Yao Z.-J."/>
            <person name="Shen Y."/>
            <person name="Qiang B.-Q."/>
            <person name="Xia Q.-C."/>
            <person name="Guo X.-K."/>
            <person name="Danchin A."/>
            <person name="Saint Girons I."/>
            <person name="Somerville R.L."/>
            <person name="Wen Y.-M."/>
            <person name="Shi M.-H."/>
            <person name="Chen Z."/>
            <person name="Xu J.-G."/>
            <person name="Zhao G.-P."/>
        </authorList>
    </citation>
    <scope>NUCLEOTIDE SEQUENCE [LARGE SCALE GENOMIC DNA]</scope>
    <source>
        <strain>56601</strain>
    </source>
</reference>
<gene>
    <name evidence="1" type="primary">rplN</name>
    <name type="ordered locus">LA_0749</name>
</gene>
<dbReference type="EMBL" id="AF115283">
    <property type="protein sequence ID" value="AAD40593.1"/>
    <property type="molecule type" value="Genomic_DNA"/>
</dbReference>
<dbReference type="EMBL" id="AE010300">
    <property type="protein sequence ID" value="AAN47948.1"/>
    <property type="molecule type" value="Genomic_DNA"/>
</dbReference>
<dbReference type="RefSeq" id="NP_710930.1">
    <property type="nucleotide sequence ID" value="NC_004342.2"/>
</dbReference>
<dbReference type="RefSeq" id="WP_000615917.1">
    <property type="nucleotide sequence ID" value="NC_004342.2"/>
</dbReference>
<dbReference type="SMR" id="Q9XD26"/>
<dbReference type="FunCoup" id="Q9XD26">
    <property type="interactions" value="540"/>
</dbReference>
<dbReference type="STRING" id="189518.LA_0749"/>
<dbReference type="PaxDb" id="189518-LA_0749"/>
<dbReference type="EnsemblBacteria" id="AAN47948">
    <property type="protein sequence ID" value="AAN47948"/>
    <property type="gene ID" value="LA_0749"/>
</dbReference>
<dbReference type="GeneID" id="61142737"/>
<dbReference type="KEGG" id="lil:LA_0749"/>
<dbReference type="PATRIC" id="fig|189518.3.peg.755"/>
<dbReference type="HOGENOM" id="CLU_095071_2_1_12"/>
<dbReference type="InParanoid" id="Q9XD26"/>
<dbReference type="OrthoDB" id="9806379at2"/>
<dbReference type="Proteomes" id="UP000001408">
    <property type="component" value="Chromosome I"/>
</dbReference>
<dbReference type="GO" id="GO:0022625">
    <property type="term" value="C:cytosolic large ribosomal subunit"/>
    <property type="evidence" value="ECO:0000318"/>
    <property type="project" value="GO_Central"/>
</dbReference>
<dbReference type="GO" id="GO:0070180">
    <property type="term" value="F:large ribosomal subunit rRNA binding"/>
    <property type="evidence" value="ECO:0000318"/>
    <property type="project" value="GO_Central"/>
</dbReference>
<dbReference type="GO" id="GO:0003735">
    <property type="term" value="F:structural constituent of ribosome"/>
    <property type="evidence" value="ECO:0000318"/>
    <property type="project" value="GO_Central"/>
</dbReference>
<dbReference type="GO" id="GO:0006412">
    <property type="term" value="P:translation"/>
    <property type="evidence" value="ECO:0007669"/>
    <property type="project" value="UniProtKB-UniRule"/>
</dbReference>
<dbReference type="CDD" id="cd00337">
    <property type="entry name" value="Ribosomal_uL14"/>
    <property type="match status" value="1"/>
</dbReference>
<dbReference type="FunFam" id="2.40.150.20:FF:000001">
    <property type="entry name" value="50S ribosomal protein L14"/>
    <property type="match status" value="1"/>
</dbReference>
<dbReference type="Gene3D" id="2.40.150.20">
    <property type="entry name" value="Ribosomal protein L14"/>
    <property type="match status" value="1"/>
</dbReference>
<dbReference type="HAMAP" id="MF_01367">
    <property type="entry name" value="Ribosomal_uL14"/>
    <property type="match status" value="1"/>
</dbReference>
<dbReference type="InterPro" id="IPR000218">
    <property type="entry name" value="Ribosomal_uL14"/>
</dbReference>
<dbReference type="InterPro" id="IPR005745">
    <property type="entry name" value="Ribosomal_uL14_bac-type"/>
</dbReference>
<dbReference type="InterPro" id="IPR036853">
    <property type="entry name" value="Ribosomal_uL14_sf"/>
</dbReference>
<dbReference type="NCBIfam" id="TIGR01067">
    <property type="entry name" value="rplN_bact"/>
    <property type="match status" value="1"/>
</dbReference>
<dbReference type="PANTHER" id="PTHR11761">
    <property type="entry name" value="50S/60S RIBOSOMAL PROTEIN L14/L23"/>
    <property type="match status" value="1"/>
</dbReference>
<dbReference type="PANTHER" id="PTHR11761:SF3">
    <property type="entry name" value="LARGE RIBOSOMAL SUBUNIT PROTEIN UL14M"/>
    <property type="match status" value="1"/>
</dbReference>
<dbReference type="Pfam" id="PF00238">
    <property type="entry name" value="Ribosomal_L14"/>
    <property type="match status" value="1"/>
</dbReference>
<dbReference type="SMART" id="SM01374">
    <property type="entry name" value="Ribosomal_L14"/>
    <property type="match status" value="1"/>
</dbReference>
<dbReference type="SUPFAM" id="SSF50193">
    <property type="entry name" value="Ribosomal protein L14"/>
    <property type="match status" value="1"/>
</dbReference>
<keyword id="KW-1185">Reference proteome</keyword>
<keyword id="KW-0687">Ribonucleoprotein</keyword>
<keyword id="KW-0689">Ribosomal protein</keyword>
<keyword id="KW-0694">RNA-binding</keyword>
<keyword id="KW-0699">rRNA-binding</keyword>